<name>SYY_CORDI</name>
<sequence length="420" mass="46751">MNIIDELQWRGLINQSTDIDALREACEKPITLYCGFDPTGDSLHAGHLVPMIMLRRFQEAGHRPITLAGGATGFIGDPRDVGERSMLSQDTIEHNLESIKKQLRSFVRFDGDSPAIMVNNADWTMSMSVVDFLRDVGKNFSLNTMLDRETVKRRLETDGISYTEFSYMLLQANDFVQLNREYDCVLQIGGGDQWGNIVSGVDLNRRVSGTKTHALTVPLVTDAQGQKFGKSTGGGKLWLDPEKTSAYSWYQYFLNAGDSVVIDYLRWFTFLTQEEIAELETEVRERPHLRAAQRRLAQEMTDLVHGHDATVSVELAAQALFGRASLQDLDEATLDGALSETVIFEVPAGESPTIIDLLIGAGLVDSKGAARRTIKEGGAYVNNERIESEDWQPTDDVLLHGAWLVLRKGKKNFAGVKYSA</sequence>
<reference key="1">
    <citation type="journal article" date="2003" name="Nucleic Acids Res.">
        <title>The complete genome sequence and analysis of Corynebacterium diphtheriae NCTC13129.</title>
        <authorList>
            <person name="Cerdeno-Tarraga A.-M."/>
            <person name="Efstratiou A."/>
            <person name="Dover L.G."/>
            <person name="Holden M.T.G."/>
            <person name="Pallen M.J."/>
            <person name="Bentley S.D."/>
            <person name="Besra G.S."/>
            <person name="Churcher C.M."/>
            <person name="James K.D."/>
            <person name="De Zoysa A."/>
            <person name="Chillingworth T."/>
            <person name="Cronin A."/>
            <person name="Dowd L."/>
            <person name="Feltwell T."/>
            <person name="Hamlin N."/>
            <person name="Holroyd S."/>
            <person name="Jagels K."/>
            <person name="Moule S."/>
            <person name="Quail M.A."/>
            <person name="Rabbinowitsch E."/>
            <person name="Rutherford K.M."/>
            <person name="Thomson N.R."/>
            <person name="Unwin L."/>
            <person name="Whitehead S."/>
            <person name="Barrell B.G."/>
            <person name="Parkhill J."/>
        </authorList>
    </citation>
    <scope>NUCLEOTIDE SEQUENCE [LARGE SCALE GENOMIC DNA]</scope>
    <source>
        <strain>ATCC 700971 / NCTC 13129 / Biotype gravis</strain>
    </source>
</reference>
<accession>Q6NHG2</accession>
<proteinExistence type="inferred from homology"/>
<organism>
    <name type="scientific">Corynebacterium diphtheriae (strain ATCC 700971 / NCTC 13129 / Biotype gravis)</name>
    <dbReference type="NCBI Taxonomy" id="257309"/>
    <lineage>
        <taxon>Bacteria</taxon>
        <taxon>Bacillati</taxon>
        <taxon>Actinomycetota</taxon>
        <taxon>Actinomycetes</taxon>
        <taxon>Mycobacteriales</taxon>
        <taxon>Corynebacteriaceae</taxon>
        <taxon>Corynebacterium</taxon>
    </lineage>
</organism>
<gene>
    <name evidence="1" type="primary">tyrS</name>
    <name type="ordered locus">DIP1176</name>
</gene>
<protein>
    <recommendedName>
        <fullName evidence="1">Tyrosine--tRNA ligase</fullName>
        <ecNumber evidence="1">6.1.1.1</ecNumber>
    </recommendedName>
    <alternativeName>
        <fullName evidence="1">Tyrosyl-tRNA synthetase</fullName>
        <shortName evidence="1">TyrRS</shortName>
    </alternativeName>
</protein>
<dbReference type="EC" id="6.1.1.1" evidence="1"/>
<dbReference type="EMBL" id="BX248357">
    <property type="protein sequence ID" value="CAE49696.1"/>
    <property type="molecule type" value="Genomic_DNA"/>
</dbReference>
<dbReference type="RefSeq" id="WP_010934862.1">
    <property type="nucleotide sequence ID" value="NC_002935.2"/>
</dbReference>
<dbReference type="SMR" id="Q6NHG2"/>
<dbReference type="STRING" id="257309.DIP1176"/>
<dbReference type="KEGG" id="cdi:DIP1176"/>
<dbReference type="HOGENOM" id="CLU_024003_0_2_11"/>
<dbReference type="Proteomes" id="UP000002198">
    <property type="component" value="Chromosome"/>
</dbReference>
<dbReference type="GO" id="GO:0005829">
    <property type="term" value="C:cytosol"/>
    <property type="evidence" value="ECO:0007669"/>
    <property type="project" value="TreeGrafter"/>
</dbReference>
<dbReference type="GO" id="GO:0005524">
    <property type="term" value="F:ATP binding"/>
    <property type="evidence" value="ECO:0007669"/>
    <property type="project" value="UniProtKB-UniRule"/>
</dbReference>
<dbReference type="GO" id="GO:0003723">
    <property type="term" value="F:RNA binding"/>
    <property type="evidence" value="ECO:0007669"/>
    <property type="project" value="UniProtKB-KW"/>
</dbReference>
<dbReference type="GO" id="GO:0004831">
    <property type="term" value="F:tyrosine-tRNA ligase activity"/>
    <property type="evidence" value="ECO:0007669"/>
    <property type="project" value="UniProtKB-UniRule"/>
</dbReference>
<dbReference type="GO" id="GO:0006437">
    <property type="term" value="P:tyrosyl-tRNA aminoacylation"/>
    <property type="evidence" value="ECO:0007669"/>
    <property type="project" value="UniProtKB-UniRule"/>
</dbReference>
<dbReference type="CDD" id="cd00805">
    <property type="entry name" value="TyrRS_core"/>
    <property type="match status" value="1"/>
</dbReference>
<dbReference type="FunFam" id="1.10.240.10:FF:000001">
    <property type="entry name" value="Tyrosine--tRNA ligase"/>
    <property type="match status" value="1"/>
</dbReference>
<dbReference type="FunFam" id="3.10.290.10:FF:000014">
    <property type="entry name" value="Tyrosine--tRNA ligase"/>
    <property type="match status" value="1"/>
</dbReference>
<dbReference type="FunFam" id="3.40.50.620:FF:000008">
    <property type="entry name" value="Tyrosine--tRNA ligase"/>
    <property type="match status" value="1"/>
</dbReference>
<dbReference type="Gene3D" id="3.40.50.620">
    <property type="entry name" value="HUPs"/>
    <property type="match status" value="1"/>
</dbReference>
<dbReference type="Gene3D" id="3.10.290.10">
    <property type="entry name" value="RNA-binding S4 domain"/>
    <property type="match status" value="1"/>
</dbReference>
<dbReference type="Gene3D" id="1.10.240.10">
    <property type="entry name" value="Tyrosyl-Transfer RNA Synthetase"/>
    <property type="match status" value="1"/>
</dbReference>
<dbReference type="HAMAP" id="MF_02006">
    <property type="entry name" value="Tyr_tRNA_synth_type1"/>
    <property type="match status" value="1"/>
</dbReference>
<dbReference type="InterPro" id="IPR001412">
    <property type="entry name" value="aa-tRNA-synth_I_CS"/>
</dbReference>
<dbReference type="InterPro" id="IPR002305">
    <property type="entry name" value="aa-tRNA-synth_Ic"/>
</dbReference>
<dbReference type="InterPro" id="IPR014729">
    <property type="entry name" value="Rossmann-like_a/b/a_fold"/>
</dbReference>
<dbReference type="InterPro" id="IPR036986">
    <property type="entry name" value="S4_RNA-bd_sf"/>
</dbReference>
<dbReference type="InterPro" id="IPR054608">
    <property type="entry name" value="SYY-like_C"/>
</dbReference>
<dbReference type="InterPro" id="IPR002307">
    <property type="entry name" value="Tyr-tRNA-ligase"/>
</dbReference>
<dbReference type="InterPro" id="IPR024088">
    <property type="entry name" value="Tyr-tRNA-ligase_bac-type"/>
</dbReference>
<dbReference type="InterPro" id="IPR024107">
    <property type="entry name" value="Tyr-tRNA-ligase_bac_1"/>
</dbReference>
<dbReference type="NCBIfam" id="TIGR00234">
    <property type="entry name" value="tyrS"/>
    <property type="match status" value="1"/>
</dbReference>
<dbReference type="PANTHER" id="PTHR11766:SF0">
    <property type="entry name" value="TYROSINE--TRNA LIGASE, MITOCHONDRIAL"/>
    <property type="match status" value="1"/>
</dbReference>
<dbReference type="PANTHER" id="PTHR11766">
    <property type="entry name" value="TYROSYL-TRNA SYNTHETASE"/>
    <property type="match status" value="1"/>
</dbReference>
<dbReference type="Pfam" id="PF22421">
    <property type="entry name" value="SYY_C-terminal"/>
    <property type="match status" value="1"/>
</dbReference>
<dbReference type="Pfam" id="PF00579">
    <property type="entry name" value="tRNA-synt_1b"/>
    <property type="match status" value="1"/>
</dbReference>
<dbReference type="PRINTS" id="PR01040">
    <property type="entry name" value="TRNASYNTHTYR"/>
</dbReference>
<dbReference type="SUPFAM" id="SSF55174">
    <property type="entry name" value="Alpha-L RNA-binding motif"/>
    <property type="match status" value="1"/>
</dbReference>
<dbReference type="SUPFAM" id="SSF52374">
    <property type="entry name" value="Nucleotidylyl transferase"/>
    <property type="match status" value="1"/>
</dbReference>
<dbReference type="PROSITE" id="PS00178">
    <property type="entry name" value="AA_TRNA_LIGASE_I"/>
    <property type="match status" value="1"/>
</dbReference>
<dbReference type="PROSITE" id="PS50889">
    <property type="entry name" value="S4"/>
    <property type="match status" value="1"/>
</dbReference>
<evidence type="ECO:0000255" key="1">
    <source>
        <dbReference type="HAMAP-Rule" id="MF_02006"/>
    </source>
</evidence>
<comment type="function">
    <text evidence="1">Catalyzes the attachment of tyrosine to tRNA(Tyr) in a two-step reaction: tyrosine is first activated by ATP to form Tyr-AMP and then transferred to the acceptor end of tRNA(Tyr).</text>
</comment>
<comment type="catalytic activity">
    <reaction evidence="1">
        <text>tRNA(Tyr) + L-tyrosine + ATP = L-tyrosyl-tRNA(Tyr) + AMP + diphosphate + H(+)</text>
        <dbReference type="Rhea" id="RHEA:10220"/>
        <dbReference type="Rhea" id="RHEA-COMP:9706"/>
        <dbReference type="Rhea" id="RHEA-COMP:9707"/>
        <dbReference type="ChEBI" id="CHEBI:15378"/>
        <dbReference type="ChEBI" id="CHEBI:30616"/>
        <dbReference type="ChEBI" id="CHEBI:33019"/>
        <dbReference type="ChEBI" id="CHEBI:58315"/>
        <dbReference type="ChEBI" id="CHEBI:78442"/>
        <dbReference type="ChEBI" id="CHEBI:78536"/>
        <dbReference type="ChEBI" id="CHEBI:456215"/>
        <dbReference type="EC" id="6.1.1.1"/>
    </reaction>
</comment>
<comment type="subunit">
    <text evidence="1">Homodimer.</text>
</comment>
<comment type="subcellular location">
    <subcellularLocation>
        <location evidence="1">Cytoplasm</location>
    </subcellularLocation>
</comment>
<comment type="similarity">
    <text evidence="1">Belongs to the class-I aminoacyl-tRNA synthetase family. TyrS type 1 subfamily.</text>
</comment>
<keyword id="KW-0030">Aminoacyl-tRNA synthetase</keyword>
<keyword id="KW-0067">ATP-binding</keyword>
<keyword id="KW-0963">Cytoplasm</keyword>
<keyword id="KW-0436">Ligase</keyword>
<keyword id="KW-0547">Nucleotide-binding</keyword>
<keyword id="KW-0648">Protein biosynthesis</keyword>
<keyword id="KW-1185">Reference proteome</keyword>
<keyword id="KW-0694">RNA-binding</keyword>
<feature type="chain" id="PRO_0000234700" description="Tyrosine--tRNA ligase">
    <location>
        <begin position="1"/>
        <end position="420"/>
    </location>
</feature>
<feature type="domain" description="S4 RNA-binding" evidence="1">
    <location>
        <begin position="352"/>
        <end position="418"/>
    </location>
</feature>
<feature type="short sequence motif" description="'HIGH' region">
    <location>
        <begin position="38"/>
        <end position="47"/>
    </location>
</feature>
<feature type="short sequence motif" description="'KMSKS' region">
    <location>
        <begin position="227"/>
        <end position="231"/>
    </location>
</feature>
<feature type="binding site" evidence="1">
    <location>
        <position position="33"/>
    </location>
    <ligand>
        <name>L-tyrosine</name>
        <dbReference type="ChEBI" id="CHEBI:58315"/>
    </ligand>
</feature>
<feature type="binding site" evidence="1">
    <location>
        <position position="167"/>
    </location>
    <ligand>
        <name>L-tyrosine</name>
        <dbReference type="ChEBI" id="CHEBI:58315"/>
    </ligand>
</feature>
<feature type="binding site" evidence="1">
    <location>
        <position position="171"/>
    </location>
    <ligand>
        <name>L-tyrosine</name>
        <dbReference type="ChEBI" id="CHEBI:58315"/>
    </ligand>
</feature>
<feature type="binding site" evidence="1">
    <location>
        <position position="230"/>
    </location>
    <ligand>
        <name>ATP</name>
        <dbReference type="ChEBI" id="CHEBI:30616"/>
    </ligand>
</feature>